<reference key="1">
    <citation type="journal article" date="1986" name="J. Virol.">
        <title>DNA sequence of the lymphotropic variant of minute virus of mice, MVM(i), and comparison with the DNA sequence of the fibrotropic prototype strain.</title>
        <authorList>
            <person name="Astell C.R."/>
            <person name="Gardiner E.M."/>
            <person name="Tattersall P."/>
        </authorList>
    </citation>
    <scope>NUCLEOTIDE SEQUENCE [GENOMIC DNA]</scope>
</reference>
<reference key="2">
    <citation type="journal article" date="1985" name="Nucleic Acids Res.">
        <title>DNA sequence comparison between two tissue-specific variants of the autonomous parvovirus, minute virus of mice.</title>
        <authorList>
            <person name="Sahli R."/>
            <person name="McMaster G.K."/>
            <person name="Hirt B."/>
        </authorList>
    </citation>
    <scope>NUCLEOTIDE SEQUENCE [GENOMIC DNA]</scope>
</reference>
<comment type="function">
    <text evidence="2">Multifunctional protein which displays endonuclease and helicase activities required for initiating and directing viral DNA replication. Also plays a role in viral packaging and transactivation of several promoters. Binds site-specifically to 2-3 approximate tandem copies of the tetranucleotide 5'TGGT3' within the origins of replication (Ori), unwinds this hairpin region and nicks one DNA strand thereby initiating the rolling circle replication (RCR). Cooperatively binds Ori with host PIF and probably other host factors, which activate the nickase function of NS1. Becomes covalently attached to the 5' end of the nick and provides a 3'OH for priming DNA synthesis. The helicase activity unwinds DNA in a 3'-5' direction on the longer strand. Participates in the transcriptional regulation of several promoters including the viral p38 promoter that regulates the expression of VP1 and VP2 transcripts. Inhibits the host cell cycle during the G1/S transition, the S-phase, and the G2/M transition. These arrests may provide essential cellular factors for viral DNA replication. Promotes apoptosis in host cell.</text>
</comment>
<comment type="catalytic activity">
    <reaction evidence="2">
        <text>ATP + H2O = ADP + phosphate + H(+)</text>
        <dbReference type="Rhea" id="RHEA:13065"/>
        <dbReference type="ChEBI" id="CHEBI:15377"/>
        <dbReference type="ChEBI" id="CHEBI:15378"/>
        <dbReference type="ChEBI" id="CHEBI:30616"/>
        <dbReference type="ChEBI" id="CHEBI:43474"/>
        <dbReference type="ChEBI" id="CHEBI:456216"/>
        <dbReference type="EC" id="3.6.4.12"/>
    </reaction>
</comment>
<comment type="cofactor">
    <cofactor evidence="2">
        <name>Mg(2+)</name>
        <dbReference type="ChEBI" id="CHEBI:18420"/>
    </cofactor>
    <text evidence="2">The endonuclease active site can probably bind other divalent cations.</text>
</comment>
<comment type="subunit">
    <text evidence="2 3">Homooligomer; when bound to DNA (By similarity). Interacts with human SYNCRIP. Interacts with host transcription factor SP1; this interaction allows high levels of viral P38 promoter transactivation by NS1 (By similarity).</text>
</comment>
<comment type="subcellular location">
    <subcellularLocation>
        <location evidence="1">Host nucleus</location>
    </subcellularLocation>
</comment>
<comment type="domain">
    <text evidence="2 3">In the N-terminus, the endonuclease region is involved in binding to the origin of replication. In the middle, there are the ATPase and helicase activities (By similarity). The C-terminus probably contains a transactivation domain (By similarity).</text>
</comment>
<comment type="PTM">
    <text evidence="2">Phosphorylated.</text>
</comment>
<comment type="similarity">
    <text evidence="7">Belongs to the parvoviruses initiator protein NS1 family.</text>
</comment>
<organismHost>
    <name type="scientific">Mus musculus</name>
    <name type="common">Mouse</name>
    <dbReference type="NCBI Taxonomy" id="10090"/>
</organismHost>
<feature type="chain" id="PRO_0000222465" description="Initiator protein NS1">
    <location>
        <begin position="1"/>
        <end position="672"/>
    </location>
</feature>
<feature type="domain" description="PV NS1-Nuc" evidence="5">
    <location>
        <begin position="21"/>
        <end position="259"/>
    </location>
</feature>
<feature type="domain" description="SF3 helicase" evidence="4">
    <location>
        <begin position="373"/>
        <end position="528"/>
    </location>
</feature>
<feature type="region of interest" description="DNA-binding; interaction with SYNCRIP" evidence="2">
    <location>
        <begin position="1"/>
        <end position="276"/>
    </location>
</feature>
<feature type="region of interest" description="Ori-binding" evidence="2">
    <location>
        <begin position="191"/>
        <end position="195"/>
    </location>
</feature>
<feature type="region of interest" description="Transactivation" evidence="2">
    <location>
        <begin position="543"/>
        <end position="672"/>
    </location>
</feature>
<feature type="region of interest" description="Disordered" evidence="6">
    <location>
        <begin position="614"/>
        <end position="643"/>
    </location>
</feature>
<feature type="short sequence motif" description="RCR-2" evidence="5">
    <location>
        <begin position="127"/>
        <end position="129"/>
    </location>
</feature>
<feature type="short sequence motif" description="RCR-3" evidence="5">
    <location>
        <begin position="210"/>
        <end position="214"/>
    </location>
</feature>
<feature type="compositionally biased region" description="Polar residues" evidence="6">
    <location>
        <begin position="614"/>
        <end position="630"/>
    </location>
</feature>
<feature type="active site" description="For nuclease activity" evidence="5">
    <location>
        <position position="210"/>
    </location>
</feature>
<feature type="binding site" evidence="5">
    <location>
        <position position="119"/>
    </location>
    <ligand>
        <name>a divalent metal cation</name>
        <dbReference type="ChEBI" id="CHEBI:60240"/>
    </ligand>
</feature>
<feature type="binding site" evidence="5">
    <location>
        <position position="127"/>
    </location>
    <ligand>
        <name>a divalent metal cation</name>
        <dbReference type="ChEBI" id="CHEBI:60240"/>
    </ligand>
</feature>
<feature type="binding site" evidence="5">
    <location>
        <position position="129"/>
    </location>
    <ligand>
        <name>a divalent metal cation</name>
        <dbReference type="ChEBI" id="CHEBI:60240"/>
    </ligand>
</feature>
<feature type="binding site" evidence="4">
    <location>
        <begin position="399"/>
        <end position="406"/>
    </location>
    <ligand>
        <name>ATP</name>
        <dbReference type="ChEBI" id="CHEBI:30616"/>
    </ligand>
</feature>
<feature type="sequence conflict" description="In Ref. 2." evidence="7" ref="2">
    <original>I</original>
    <variation>L</variation>
    <location>
        <position position="597"/>
    </location>
</feature>
<proteinExistence type="inferred from homology"/>
<name>NS1_MUMIM</name>
<sequence length="672" mass="76140">MAGNAYSDEVLGTTNWLKEKSNQEVFSFVFKTEDVQLNGKDIGWNNYKKELQEDELKSLQRGAETTWDQSEDMEWESTVDEMTKKQVFIYDSLVKKCLFEVLSTKNIAPADVTWFVQHEWGKDQGWHCHVLIGGKDFSQAQGKWWRRQLNVYWSRWLVTACNVQLTPAERIKLREIAEDSEWVTLLTYKHKQTKKDYTKCVLFGNMIAYYFLTKKKISTSPPRDGGYFLSSDSGWKTNFLKEGERHLVSKLYTDDMRPETVETTVTTAQETKRGRIQTKKEVSIKTTLKELVHKRVTSPEDWMMMQPDSYIEMMAQPGGENLLKNTLEICTLTLARTKTAFDLILEKAETSKLTNFSLPDTRTCKIFAFHGWNYVKVCHAICCVLNRQGGKRNTVLFHGPASTGKSIIAQAIAQAVGNVGCYNAANVNFPFNDCTNKNLIWVEEAGNFGQQVNQFKAICSGQTIRIDQKGKGSKQIEPTPVIMTTNENITVVRIGCEERPEHTQPIRDRMLNIHLTHTLPGDFGLVDKNEWPMICAWLVKNGYQSTMASYCAKWGKVPDWSENWAEPKVPTPINSLGSARSPFTTPKSTPLSQNYAITPLASDLEDLALEPWSTPNTPVAGTAETQNTGEAGSKACQDGQLSPTWSEIEEDLRACFGAEPLKRDFSEPLNLD</sequence>
<protein>
    <recommendedName>
        <fullName evidence="2">Initiator protein NS1</fullName>
        <shortName>NS1</shortName>
        <ecNumber evidence="3">3.1.21.-</ecNumber>
        <ecNumber evidence="3">3.6.4.12</ecNumber>
    </recommendedName>
    <alternativeName>
        <fullName>NCVP1</fullName>
    </alternativeName>
    <alternativeName>
        <fullName>Non-capsid protein NS-1</fullName>
    </alternativeName>
    <alternativeName>
        <fullName>Non-structural protein 1</fullName>
    </alternativeName>
    <alternativeName>
        <fullName>Non-structural protein NS1</fullName>
    </alternativeName>
</protein>
<accession>P07300</accession>
<accession>P10837</accession>
<organism>
    <name type="scientific">Murine minute virus (strain MVMi)</name>
    <name type="common">MVM</name>
    <name type="synonym">Murine parvovirus</name>
    <dbReference type="NCBI Taxonomy" id="10795"/>
    <lineage>
        <taxon>Viruses</taxon>
        <taxon>Monodnaviria</taxon>
        <taxon>Shotokuvirae</taxon>
        <taxon>Cossaviricota</taxon>
        <taxon>Quintoviricetes</taxon>
        <taxon>Piccovirales</taxon>
        <taxon>Parvoviridae</taxon>
        <taxon>Parvovirinae</taxon>
        <taxon>Protoparvovirus</taxon>
        <taxon>Protoparvovirus rodent1</taxon>
    </lineage>
</organism>
<dbReference type="EC" id="3.1.21.-" evidence="3"/>
<dbReference type="EC" id="3.6.4.12" evidence="3"/>
<dbReference type="EMBL" id="X02481">
    <property type="status" value="NOT_ANNOTATED_CDS"/>
    <property type="molecule type" value="Genomic_DNA"/>
</dbReference>
<dbReference type="EMBL" id="M12032">
    <property type="protein sequence ID" value="AAA69567.1"/>
    <property type="molecule type" value="Genomic_DNA"/>
</dbReference>
<dbReference type="SMR" id="P07300"/>
<dbReference type="Proteomes" id="UP000007783">
    <property type="component" value="Genome"/>
</dbReference>
<dbReference type="Proteomes" id="UP000104537">
    <property type="component" value="Genome"/>
</dbReference>
<dbReference type="GO" id="GO:0042025">
    <property type="term" value="C:host cell nucleus"/>
    <property type="evidence" value="ECO:0007669"/>
    <property type="project" value="UniProtKB-SubCell"/>
</dbReference>
<dbReference type="GO" id="GO:0005524">
    <property type="term" value="F:ATP binding"/>
    <property type="evidence" value="ECO:0007669"/>
    <property type="project" value="UniProtKB-KW"/>
</dbReference>
<dbReference type="GO" id="GO:0016887">
    <property type="term" value="F:ATP hydrolysis activity"/>
    <property type="evidence" value="ECO:0007669"/>
    <property type="project" value="RHEA"/>
</dbReference>
<dbReference type="GO" id="GO:0003677">
    <property type="term" value="F:DNA binding"/>
    <property type="evidence" value="ECO:0007669"/>
    <property type="project" value="UniProtKB-KW"/>
</dbReference>
<dbReference type="GO" id="GO:0004519">
    <property type="term" value="F:endonuclease activity"/>
    <property type="evidence" value="ECO:0007669"/>
    <property type="project" value="UniProtKB-KW"/>
</dbReference>
<dbReference type="GO" id="GO:0004386">
    <property type="term" value="F:helicase activity"/>
    <property type="evidence" value="ECO:0007669"/>
    <property type="project" value="UniProtKB-KW"/>
</dbReference>
<dbReference type="GO" id="GO:0046872">
    <property type="term" value="F:metal ion binding"/>
    <property type="evidence" value="ECO:0007669"/>
    <property type="project" value="UniProtKB-KW"/>
</dbReference>
<dbReference type="GO" id="GO:0006260">
    <property type="term" value="P:DNA replication"/>
    <property type="evidence" value="ECO:0007669"/>
    <property type="project" value="UniProtKB-KW"/>
</dbReference>
<dbReference type="GO" id="GO:0039592">
    <property type="term" value="P:symbiont-mediated arrest of host cell cycle during G2/M transition"/>
    <property type="evidence" value="ECO:0007669"/>
    <property type="project" value="UniProtKB-KW"/>
</dbReference>
<dbReference type="GO" id="GO:0052150">
    <property type="term" value="P:symbiont-mediated perturbation of host apoptosis"/>
    <property type="evidence" value="ECO:0007669"/>
    <property type="project" value="UniProtKB-KW"/>
</dbReference>
<dbReference type="GO" id="GO:0039645">
    <property type="term" value="P:symbiont-mediated perturbation of host cell cycle G1/S transition checkpoint"/>
    <property type="evidence" value="ECO:0007669"/>
    <property type="project" value="UniProtKB-KW"/>
</dbReference>
<dbReference type="GO" id="GO:0039693">
    <property type="term" value="P:viral DNA genome replication"/>
    <property type="evidence" value="ECO:0007669"/>
    <property type="project" value="UniProtKB-KW"/>
</dbReference>
<dbReference type="FunFam" id="3.40.50.300:FF:003160">
    <property type="entry name" value="Initiator protein NS1"/>
    <property type="match status" value="1"/>
</dbReference>
<dbReference type="Gene3D" id="3.40.1310.20">
    <property type="match status" value="1"/>
</dbReference>
<dbReference type="Gene3D" id="3.40.50.300">
    <property type="entry name" value="P-loop containing nucleotide triphosphate hydrolases"/>
    <property type="match status" value="1"/>
</dbReference>
<dbReference type="InterPro" id="IPR014015">
    <property type="entry name" value="Helicase_SF3_DNA-vir"/>
</dbReference>
<dbReference type="InterPro" id="IPR027417">
    <property type="entry name" value="P-loop_NTPase"/>
</dbReference>
<dbReference type="InterPro" id="IPR021972">
    <property type="entry name" value="Parvovirus_NS1_C"/>
</dbReference>
<dbReference type="InterPro" id="IPR001257">
    <property type="entry name" value="Parvovirus_NS1_helicase"/>
</dbReference>
<dbReference type="InterPro" id="IPR021076">
    <property type="entry name" value="Parvovirus_NS1_N"/>
</dbReference>
<dbReference type="InterPro" id="IPR049901">
    <property type="entry name" value="PV_NS1-NUC"/>
</dbReference>
<dbReference type="Pfam" id="PF12117">
    <property type="entry name" value="NS1_C"/>
    <property type="match status" value="1"/>
</dbReference>
<dbReference type="Pfam" id="PF01057">
    <property type="entry name" value="Parvo_NS1"/>
    <property type="match status" value="1"/>
</dbReference>
<dbReference type="Pfam" id="PF12433">
    <property type="entry name" value="PV_NSP1"/>
    <property type="match status" value="1"/>
</dbReference>
<dbReference type="SUPFAM" id="SSF55464">
    <property type="entry name" value="Origin of replication-binding domain, RBD-like"/>
    <property type="match status" value="1"/>
</dbReference>
<dbReference type="SUPFAM" id="SSF52540">
    <property type="entry name" value="P-loop containing nucleoside triphosphate hydrolases"/>
    <property type="match status" value="1"/>
</dbReference>
<dbReference type="PROSITE" id="PS52022">
    <property type="entry name" value="PV_NS1_NUC"/>
    <property type="match status" value="1"/>
</dbReference>
<dbReference type="PROSITE" id="PS51206">
    <property type="entry name" value="SF3_HELICASE_1"/>
    <property type="match status" value="1"/>
</dbReference>
<keyword id="KW-0067">ATP-binding</keyword>
<keyword id="KW-0190">Covalent protein-DNA linkage</keyword>
<keyword id="KW-0235">DNA replication</keyword>
<keyword id="KW-0238">DNA-binding</keyword>
<keyword id="KW-0255">Endonuclease</keyword>
<keyword id="KW-1078">G1/S host cell cycle checkpoint dysregulation by virus</keyword>
<keyword id="KW-0347">Helicase</keyword>
<keyword id="KW-1079">Host G2/M cell cycle arrest by virus</keyword>
<keyword id="KW-1048">Host nucleus</keyword>
<keyword id="KW-0945">Host-virus interaction</keyword>
<keyword id="KW-0378">Hydrolase</keyword>
<keyword id="KW-0460">Magnesium</keyword>
<keyword id="KW-0479">Metal-binding</keyword>
<keyword id="KW-1119">Modulation of host cell apoptosis by virus</keyword>
<keyword id="KW-1121">Modulation of host cell cycle by virus</keyword>
<keyword id="KW-0540">Nuclease</keyword>
<keyword id="KW-0547">Nucleotide-binding</keyword>
<keyword id="KW-0804">Transcription</keyword>
<keyword id="KW-0805">Transcription regulation</keyword>
<keyword id="KW-1194">Viral DNA replication</keyword>
<keyword id="KW-0231">Viral genome packaging</keyword>
<keyword id="KW-1188">Viral release from host cell</keyword>
<evidence type="ECO:0000250" key="1">
    <source>
        <dbReference type="UniProtKB" id="D0EZM8"/>
    </source>
</evidence>
<evidence type="ECO:0000250" key="2">
    <source>
        <dbReference type="UniProtKB" id="P03134"/>
    </source>
</evidence>
<evidence type="ECO:0000250" key="3">
    <source>
        <dbReference type="UniProtKB" id="Q9PZT1"/>
    </source>
</evidence>
<evidence type="ECO:0000255" key="4">
    <source>
        <dbReference type="PROSITE-ProRule" id="PRU00551"/>
    </source>
</evidence>
<evidence type="ECO:0000255" key="5">
    <source>
        <dbReference type="PROSITE-ProRule" id="PRU01366"/>
    </source>
</evidence>
<evidence type="ECO:0000256" key="6">
    <source>
        <dbReference type="SAM" id="MobiDB-lite"/>
    </source>
</evidence>
<evidence type="ECO:0000305" key="7"/>
<gene>
    <name type="primary">NS1</name>
</gene>